<organism>
    <name type="scientific">Periplaneta fuliginosa</name>
    <name type="common">Smokybrown cockroach</name>
    <name type="synonym">Dusky-brown cockroach</name>
    <dbReference type="NCBI Taxonomy" id="36977"/>
    <lineage>
        <taxon>Eukaryota</taxon>
        <taxon>Metazoa</taxon>
        <taxon>Ecdysozoa</taxon>
        <taxon>Arthropoda</taxon>
        <taxon>Hexapoda</taxon>
        <taxon>Insecta</taxon>
        <taxon>Pterygota</taxon>
        <taxon>Neoptera</taxon>
        <taxon>Polyneoptera</taxon>
        <taxon>Dictyoptera</taxon>
        <taxon>Blattodea</taxon>
        <taxon>Blattoidea</taxon>
        <taxon>Blattidae</taxon>
        <taxon>Blattinae</taxon>
        <taxon>Periplaneta</taxon>
    </lineage>
</organism>
<reference evidence="4" key="1">
    <citation type="journal article" date="2009" name="BMC Evol. Biol.">
        <title>A proteomic approach for studying insect phylogeny: CAPA peptides of ancient insect taxa (Dictyoptera, Blattoptera) as a test case.</title>
        <authorList>
            <person name="Roth S."/>
            <person name="Fromm B."/>
            <person name="Gaede G."/>
            <person name="Predel R."/>
        </authorList>
    </citation>
    <scope>PROTEIN SEQUENCE</scope>
    <scope>AMIDATION AT ASN-11</scope>
    <source>
        <tissue evidence="2">Abdominal perisympathetic organs</tissue>
    </source>
</reference>
<accession>P85713</accession>
<protein>
    <recommendedName>
        <fullName evidence="3">Periviscerokinin-1</fullName>
        <shortName evidence="3">PerFu-PVK-1</shortName>
    </recommendedName>
</protein>
<feature type="peptide" id="PRO_0000378759" description="Periviscerokinin-1" evidence="2">
    <location>
        <begin position="1"/>
        <end position="11"/>
    </location>
</feature>
<feature type="modified residue" description="Asparagine amide" evidence="2">
    <location>
        <position position="11"/>
    </location>
</feature>
<sequence length="11" mass="1114">GASGLIPVMRN</sequence>
<comment type="function">
    <text evidence="4">Mediates visceral muscle contractile activity (myotropic activity).</text>
</comment>
<comment type="subcellular location">
    <subcellularLocation>
        <location evidence="4">Secreted</location>
    </subcellularLocation>
</comment>
<comment type="similarity">
    <text evidence="1">Belongs to the periviscerokinin family.</text>
</comment>
<dbReference type="GO" id="GO:0005576">
    <property type="term" value="C:extracellular region"/>
    <property type="evidence" value="ECO:0007669"/>
    <property type="project" value="UniProtKB-SubCell"/>
</dbReference>
<dbReference type="GO" id="GO:0007218">
    <property type="term" value="P:neuropeptide signaling pathway"/>
    <property type="evidence" value="ECO:0007669"/>
    <property type="project" value="UniProtKB-KW"/>
</dbReference>
<name>PVK1_PERFU</name>
<evidence type="ECO:0000255" key="1"/>
<evidence type="ECO:0000269" key="2">
    <source>
    </source>
</evidence>
<evidence type="ECO:0000303" key="3">
    <source>
    </source>
</evidence>
<evidence type="ECO:0000305" key="4"/>
<proteinExistence type="evidence at protein level"/>
<keyword id="KW-0027">Amidation</keyword>
<keyword id="KW-0903">Direct protein sequencing</keyword>
<keyword id="KW-0527">Neuropeptide</keyword>
<keyword id="KW-0964">Secreted</keyword>